<organism>
    <name type="scientific">Dictyostelium discoideum</name>
    <name type="common">Social amoeba</name>
    <dbReference type="NCBI Taxonomy" id="44689"/>
    <lineage>
        <taxon>Eukaryota</taxon>
        <taxon>Amoebozoa</taxon>
        <taxon>Evosea</taxon>
        <taxon>Eumycetozoa</taxon>
        <taxon>Dictyostelia</taxon>
        <taxon>Dictyosteliales</taxon>
        <taxon>Dictyosteliaceae</taxon>
        <taxon>Dictyostelium</taxon>
    </lineage>
</organism>
<feature type="chain" id="PRO_0000355015" description="Probable serine/threonine-protein kinase DDB_G0286841">
    <location>
        <begin position="1"/>
        <end position="462"/>
    </location>
</feature>
<feature type="domain" description="Protein kinase" evidence="1">
    <location>
        <begin position="64"/>
        <end position="358"/>
    </location>
</feature>
<feature type="domain" description="AGC-kinase C-terminal">
    <location>
        <begin position="359"/>
        <end position="462"/>
    </location>
</feature>
<feature type="region of interest" description="Disordered" evidence="3">
    <location>
        <begin position="414"/>
        <end position="447"/>
    </location>
</feature>
<feature type="compositionally biased region" description="Low complexity" evidence="3">
    <location>
        <begin position="414"/>
        <end position="439"/>
    </location>
</feature>
<feature type="active site" description="Proton acceptor" evidence="1 2">
    <location>
        <position position="188"/>
    </location>
</feature>
<feature type="binding site" evidence="1">
    <location>
        <begin position="70"/>
        <end position="78"/>
    </location>
    <ligand>
        <name>ATP</name>
        <dbReference type="ChEBI" id="CHEBI:30616"/>
    </ligand>
</feature>
<feature type="binding site" evidence="1">
    <location>
        <position position="93"/>
    </location>
    <ligand>
        <name>ATP</name>
        <dbReference type="ChEBI" id="CHEBI:30616"/>
    </ligand>
</feature>
<reference key="1">
    <citation type="journal article" date="2005" name="Nature">
        <title>The genome of the social amoeba Dictyostelium discoideum.</title>
        <authorList>
            <person name="Eichinger L."/>
            <person name="Pachebat J.A."/>
            <person name="Gloeckner G."/>
            <person name="Rajandream M.A."/>
            <person name="Sucgang R."/>
            <person name="Berriman M."/>
            <person name="Song J."/>
            <person name="Olsen R."/>
            <person name="Szafranski K."/>
            <person name="Xu Q."/>
            <person name="Tunggal B."/>
            <person name="Kummerfeld S."/>
            <person name="Madera M."/>
            <person name="Konfortov B.A."/>
            <person name="Rivero F."/>
            <person name="Bankier A.T."/>
            <person name="Lehmann R."/>
            <person name="Hamlin N."/>
            <person name="Davies R."/>
            <person name="Gaudet P."/>
            <person name="Fey P."/>
            <person name="Pilcher K."/>
            <person name="Chen G."/>
            <person name="Saunders D."/>
            <person name="Sodergren E.J."/>
            <person name="Davis P."/>
            <person name="Kerhornou A."/>
            <person name="Nie X."/>
            <person name="Hall N."/>
            <person name="Anjard C."/>
            <person name="Hemphill L."/>
            <person name="Bason N."/>
            <person name="Farbrother P."/>
            <person name="Desany B."/>
            <person name="Just E."/>
            <person name="Morio T."/>
            <person name="Rost R."/>
            <person name="Churcher C.M."/>
            <person name="Cooper J."/>
            <person name="Haydock S."/>
            <person name="van Driessche N."/>
            <person name="Cronin A."/>
            <person name="Goodhead I."/>
            <person name="Muzny D.M."/>
            <person name="Mourier T."/>
            <person name="Pain A."/>
            <person name="Lu M."/>
            <person name="Harper D."/>
            <person name="Lindsay R."/>
            <person name="Hauser H."/>
            <person name="James K.D."/>
            <person name="Quiles M."/>
            <person name="Madan Babu M."/>
            <person name="Saito T."/>
            <person name="Buchrieser C."/>
            <person name="Wardroper A."/>
            <person name="Felder M."/>
            <person name="Thangavelu M."/>
            <person name="Johnson D."/>
            <person name="Knights A."/>
            <person name="Loulseged H."/>
            <person name="Mungall K.L."/>
            <person name="Oliver K."/>
            <person name="Price C."/>
            <person name="Quail M.A."/>
            <person name="Urushihara H."/>
            <person name="Hernandez J."/>
            <person name="Rabbinowitsch E."/>
            <person name="Steffen D."/>
            <person name="Sanders M."/>
            <person name="Ma J."/>
            <person name="Kohara Y."/>
            <person name="Sharp S."/>
            <person name="Simmonds M.N."/>
            <person name="Spiegler S."/>
            <person name="Tivey A."/>
            <person name="Sugano S."/>
            <person name="White B."/>
            <person name="Walker D."/>
            <person name="Woodward J.R."/>
            <person name="Winckler T."/>
            <person name="Tanaka Y."/>
            <person name="Shaulsky G."/>
            <person name="Schleicher M."/>
            <person name="Weinstock G.M."/>
            <person name="Rosenthal A."/>
            <person name="Cox E.C."/>
            <person name="Chisholm R.L."/>
            <person name="Gibbs R.A."/>
            <person name="Loomis W.F."/>
            <person name="Platzer M."/>
            <person name="Kay R.R."/>
            <person name="Williams J.G."/>
            <person name="Dear P.H."/>
            <person name="Noegel A.A."/>
            <person name="Barrell B.G."/>
            <person name="Kuspa A."/>
        </authorList>
    </citation>
    <scope>NUCLEOTIDE SEQUENCE [LARGE SCALE GENOMIC DNA]</scope>
    <source>
        <strain>AX4</strain>
    </source>
</reference>
<gene>
    <name type="ORF">DDB_G0286841</name>
</gene>
<name>Y0700_DICDI</name>
<comment type="catalytic activity">
    <reaction>
        <text>L-seryl-[protein] + ATP = O-phospho-L-seryl-[protein] + ADP + H(+)</text>
        <dbReference type="Rhea" id="RHEA:17989"/>
        <dbReference type="Rhea" id="RHEA-COMP:9863"/>
        <dbReference type="Rhea" id="RHEA-COMP:11604"/>
        <dbReference type="ChEBI" id="CHEBI:15378"/>
        <dbReference type="ChEBI" id="CHEBI:29999"/>
        <dbReference type="ChEBI" id="CHEBI:30616"/>
        <dbReference type="ChEBI" id="CHEBI:83421"/>
        <dbReference type="ChEBI" id="CHEBI:456216"/>
        <dbReference type="EC" id="2.7.11.1"/>
    </reaction>
</comment>
<comment type="catalytic activity">
    <reaction>
        <text>L-threonyl-[protein] + ATP = O-phospho-L-threonyl-[protein] + ADP + H(+)</text>
        <dbReference type="Rhea" id="RHEA:46608"/>
        <dbReference type="Rhea" id="RHEA-COMP:11060"/>
        <dbReference type="Rhea" id="RHEA-COMP:11605"/>
        <dbReference type="ChEBI" id="CHEBI:15378"/>
        <dbReference type="ChEBI" id="CHEBI:30013"/>
        <dbReference type="ChEBI" id="CHEBI:30616"/>
        <dbReference type="ChEBI" id="CHEBI:61977"/>
        <dbReference type="ChEBI" id="CHEBI:456216"/>
        <dbReference type="EC" id="2.7.11.1"/>
    </reaction>
</comment>
<comment type="similarity">
    <text evidence="4">Belongs to the protein kinase superfamily. AGC Ser/Thr protein kinase family.</text>
</comment>
<protein>
    <recommendedName>
        <fullName>Probable serine/threonine-protein kinase DDB_G0286841</fullName>
        <ecNumber>2.7.11.1</ecNumber>
    </recommendedName>
</protein>
<sequence>MFIINKNLPHFKNDFSDYYSKLDNDLSISSPKFESPVLSQPKVKPLSHDIISICSTKITPLDDFNFLKVISKGGFGKVYLAENKITKKTVAIKVIKKSDTIKKMMVDQVNIEKTILSNYKCNFIVELFSSFQTDKKLFFVMEFLNGGDCASLLRSFNNNMPEDLTKNIIAQIIICLEYLHNHGIIHRDLKPDNILIDSNGHIKLADFGLSKFDFVDESCNIKILKNSFTLYNTNNNNTTENQKILGTPYYIPPEVILGKGYGKTIDWWSLGIILYEFLIGYPPFQEDEPNESINPKSDNDEKNVRIIFNKITNHKKKLYFPKKLYPVAIDLIEKLLDPNPSVRLGANGVDEVKCHPFFSEINWKIYEDQKVLVFQPFVENDCDTSYFIERKEENNKNKINDDIDSLILNQNNQNIYKNNNNNNNNNNNNNNNNNNNNNNDDNDDENNIIDQNLFIDFDFPTY</sequence>
<keyword id="KW-0067">ATP-binding</keyword>
<keyword id="KW-0418">Kinase</keyword>
<keyword id="KW-0547">Nucleotide-binding</keyword>
<keyword id="KW-1185">Reference proteome</keyword>
<keyword id="KW-0723">Serine/threonine-protein kinase</keyword>
<keyword id="KW-0808">Transferase</keyword>
<proteinExistence type="inferred from homology"/>
<evidence type="ECO:0000255" key="1">
    <source>
        <dbReference type="PROSITE-ProRule" id="PRU00159"/>
    </source>
</evidence>
<evidence type="ECO:0000255" key="2">
    <source>
        <dbReference type="PROSITE-ProRule" id="PRU10027"/>
    </source>
</evidence>
<evidence type="ECO:0000256" key="3">
    <source>
        <dbReference type="SAM" id="MobiDB-lite"/>
    </source>
</evidence>
<evidence type="ECO:0000305" key="4"/>
<accession>Q54L81</accession>
<dbReference type="EC" id="2.7.11.1"/>
<dbReference type="EMBL" id="AAFI02000090">
    <property type="protein sequence ID" value="EAL64018.1"/>
    <property type="molecule type" value="Genomic_DNA"/>
</dbReference>
<dbReference type="RefSeq" id="XP_637522.1">
    <property type="nucleotide sequence ID" value="XM_632430.1"/>
</dbReference>
<dbReference type="SMR" id="Q54L81"/>
<dbReference type="STRING" id="44689.Q54L81"/>
<dbReference type="PaxDb" id="44689-DDB0220700"/>
<dbReference type="EnsemblProtists" id="EAL64018">
    <property type="protein sequence ID" value="EAL64018"/>
    <property type="gene ID" value="DDB_G0286841"/>
</dbReference>
<dbReference type="GeneID" id="8625820"/>
<dbReference type="KEGG" id="ddi:DDB_G0286841"/>
<dbReference type="dictyBase" id="DDB_G0286841"/>
<dbReference type="VEuPathDB" id="AmoebaDB:DDB_G0286841"/>
<dbReference type="eggNOG" id="KOG0606">
    <property type="taxonomic scope" value="Eukaryota"/>
</dbReference>
<dbReference type="HOGENOM" id="CLU_000288_63_5_1"/>
<dbReference type="InParanoid" id="Q54L81"/>
<dbReference type="OMA" id="ITETETC"/>
<dbReference type="PhylomeDB" id="Q54L81"/>
<dbReference type="PRO" id="PR:Q54L81"/>
<dbReference type="Proteomes" id="UP000002195">
    <property type="component" value="Chromosome 4"/>
</dbReference>
<dbReference type="GO" id="GO:0005524">
    <property type="term" value="F:ATP binding"/>
    <property type="evidence" value="ECO:0007669"/>
    <property type="project" value="UniProtKB-KW"/>
</dbReference>
<dbReference type="GO" id="GO:0106310">
    <property type="term" value="F:protein serine kinase activity"/>
    <property type="evidence" value="ECO:0007669"/>
    <property type="project" value="RHEA"/>
</dbReference>
<dbReference type="GO" id="GO:0004674">
    <property type="term" value="F:protein serine/threonine kinase activity"/>
    <property type="evidence" value="ECO:0000318"/>
    <property type="project" value="GO_Central"/>
</dbReference>
<dbReference type="GO" id="GO:0035556">
    <property type="term" value="P:intracellular signal transduction"/>
    <property type="evidence" value="ECO:0000318"/>
    <property type="project" value="GO_Central"/>
</dbReference>
<dbReference type="CDD" id="cd05579">
    <property type="entry name" value="STKc_MAST_like"/>
    <property type="match status" value="1"/>
</dbReference>
<dbReference type="FunFam" id="1.10.510.10:FF:002251">
    <property type="match status" value="1"/>
</dbReference>
<dbReference type="FunFam" id="3.30.200.20:FF:000103">
    <property type="entry name" value="Protein kinase C"/>
    <property type="match status" value="1"/>
</dbReference>
<dbReference type="Gene3D" id="3.30.200.20">
    <property type="entry name" value="Phosphorylase Kinase, domain 1"/>
    <property type="match status" value="1"/>
</dbReference>
<dbReference type="Gene3D" id="1.10.510.10">
    <property type="entry name" value="Transferase(Phosphotransferase) domain 1"/>
    <property type="match status" value="1"/>
</dbReference>
<dbReference type="InterPro" id="IPR011009">
    <property type="entry name" value="Kinase-like_dom_sf"/>
</dbReference>
<dbReference type="InterPro" id="IPR000719">
    <property type="entry name" value="Prot_kinase_dom"/>
</dbReference>
<dbReference type="InterPro" id="IPR008271">
    <property type="entry name" value="Ser/Thr_kinase_AS"/>
</dbReference>
<dbReference type="InterPro" id="IPR050236">
    <property type="entry name" value="Ser_Thr_kinase_AGC"/>
</dbReference>
<dbReference type="PANTHER" id="PTHR24356">
    <property type="entry name" value="SERINE/THREONINE-PROTEIN KINASE"/>
    <property type="match status" value="1"/>
</dbReference>
<dbReference type="PANTHER" id="PTHR24356:SF1">
    <property type="entry name" value="SERINE_THREONINE-PROTEIN KINASE GREATWALL"/>
    <property type="match status" value="1"/>
</dbReference>
<dbReference type="Pfam" id="PF00069">
    <property type="entry name" value="Pkinase"/>
    <property type="match status" value="1"/>
</dbReference>
<dbReference type="SMART" id="SM00220">
    <property type="entry name" value="S_TKc"/>
    <property type="match status" value="1"/>
</dbReference>
<dbReference type="SUPFAM" id="SSF56112">
    <property type="entry name" value="Protein kinase-like (PK-like)"/>
    <property type="match status" value="1"/>
</dbReference>
<dbReference type="PROSITE" id="PS50011">
    <property type="entry name" value="PROTEIN_KINASE_DOM"/>
    <property type="match status" value="1"/>
</dbReference>
<dbReference type="PROSITE" id="PS00108">
    <property type="entry name" value="PROTEIN_KINASE_ST"/>
    <property type="match status" value="1"/>
</dbReference>